<feature type="peptide" id="PRO_0000044138" description="Testis ecdysiotropin peptide E">
    <location>
        <begin position="1"/>
        <end position="13"/>
    </location>
</feature>
<proteinExistence type="evidence at protein level"/>
<reference key="1">
    <citation type="journal article" date="1997" name="Arch. Insect Biochem. Physiol.">
        <title>Naturally occurring analogs of Lymantria testis ecdysiotropin, a gonadotropin isolated from brains of Lymantria dispar pupae.</title>
        <authorList>
            <person name="Loeb M.J."/>
            <person name="Wagner R.M."/>
            <person name="Woods C.W."/>
            <person name="Gelman D.G."/>
            <person name="Harrison D."/>
            <person name="Bell R.A."/>
        </authorList>
    </citation>
    <scope>PROTEIN SEQUENCE</scope>
    <source>
        <tissue>Brain</tissue>
    </source>
</reference>
<comment type="function">
    <text>Stimulates synthesis of ecdysteroid in the testes of larvae and pupae.</text>
</comment>
<protein>
    <recommendedName>
        <fullName>Testis ecdysiotropin peptide E</fullName>
        <shortName>TE</shortName>
    </recommendedName>
</protein>
<organism>
    <name type="scientific">Lymantria dispar</name>
    <name type="common">Gypsy moth</name>
    <name type="synonym">Porthetria dispar</name>
    <dbReference type="NCBI Taxonomy" id="13123"/>
    <lineage>
        <taxon>Eukaryota</taxon>
        <taxon>Metazoa</taxon>
        <taxon>Ecdysozoa</taxon>
        <taxon>Arthropoda</taxon>
        <taxon>Hexapoda</taxon>
        <taxon>Insecta</taxon>
        <taxon>Pterygota</taxon>
        <taxon>Neoptera</taxon>
        <taxon>Endopterygota</taxon>
        <taxon>Lepidoptera</taxon>
        <taxon>Glossata</taxon>
        <taxon>Ditrysia</taxon>
        <taxon>Noctuoidea</taxon>
        <taxon>Erebidae</taxon>
        <taxon>Lymantriinae</taxon>
        <taxon>Lymantria</taxon>
    </lineage>
</organism>
<keyword id="KW-0903">Direct protein sequencing</keyword>
<accession>P80941</accession>
<sequence>SAIDPNPDTPDSE</sequence>
<name>ECDE_LYMDI</name>